<proteinExistence type="evidence at protein level"/>
<name>S53A1_DROME</name>
<gene>
    <name evidence="5" type="primary">PXo</name>
    <name evidence="1" type="synonym">XPR1</name>
    <name evidence="8" type="ORF">CG10483</name>
</gene>
<organism evidence="9">
    <name type="scientific">Drosophila melanogaster</name>
    <name type="common">Fruit fly</name>
    <dbReference type="NCBI Taxonomy" id="7227"/>
    <lineage>
        <taxon>Eukaryota</taxon>
        <taxon>Metazoa</taxon>
        <taxon>Ecdysozoa</taxon>
        <taxon>Arthropoda</taxon>
        <taxon>Hexapoda</taxon>
        <taxon>Insecta</taxon>
        <taxon>Pterygota</taxon>
        <taxon>Neoptera</taxon>
        <taxon>Endopterygota</taxon>
        <taxon>Diptera</taxon>
        <taxon>Brachycera</taxon>
        <taxon>Muscomorpha</taxon>
        <taxon>Ephydroidea</taxon>
        <taxon>Drosophilidae</taxon>
        <taxon>Drosophila</taxon>
        <taxon>Sophophora</taxon>
    </lineage>
</organism>
<reference evidence="9" key="1">
    <citation type="journal article" date="2000" name="Science">
        <title>The genome sequence of Drosophila melanogaster.</title>
        <authorList>
            <person name="Adams M.D."/>
            <person name="Celniker S.E."/>
            <person name="Holt R.A."/>
            <person name="Evans C.A."/>
            <person name="Gocayne J.D."/>
            <person name="Amanatides P.G."/>
            <person name="Scherer S.E."/>
            <person name="Li P.W."/>
            <person name="Hoskins R.A."/>
            <person name="Galle R.F."/>
            <person name="George R.A."/>
            <person name="Lewis S.E."/>
            <person name="Richards S."/>
            <person name="Ashburner M."/>
            <person name="Henderson S.N."/>
            <person name="Sutton G.G."/>
            <person name="Wortman J.R."/>
            <person name="Yandell M.D."/>
            <person name="Zhang Q."/>
            <person name="Chen L.X."/>
            <person name="Brandon R.C."/>
            <person name="Rogers Y.-H.C."/>
            <person name="Blazej R.G."/>
            <person name="Champe M."/>
            <person name="Pfeiffer B.D."/>
            <person name="Wan K.H."/>
            <person name="Doyle C."/>
            <person name="Baxter E.G."/>
            <person name="Helt G."/>
            <person name="Nelson C.R."/>
            <person name="Miklos G.L.G."/>
            <person name="Abril J.F."/>
            <person name="Agbayani A."/>
            <person name="An H.-J."/>
            <person name="Andrews-Pfannkoch C."/>
            <person name="Baldwin D."/>
            <person name="Ballew R.M."/>
            <person name="Basu A."/>
            <person name="Baxendale J."/>
            <person name="Bayraktaroglu L."/>
            <person name="Beasley E.M."/>
            <person name="Beeson K.Y."/>
            <person name="Benos P.V."/>
            <person name="Berman B.P."/>
            <person name="Bhandari D."/>
            <person name="Bolshakov S."/>
            <person name="Borkova D."/>
            <person name="Botchan M.R."/>
            <person name="Bouck J."/>
            <person name="Brokstein P."/>
            <person name="Brottier P."/>
            <person name="Burtis K.C."/>
            <person name="Busam D.A."/>
            <person name="Butler H."/>
            <person name="Cadieu E."/>
            <person name="Center A."/>
            <person name="Chandra I."/>
            <person name="Cherry J.M."/>
            <person name="Cawley S."/>
            <person name="Dahlke C."/>
            <person name="Davenport L.B."/>
            <person name="Davies P."/>
            <person name="de Pablos B."/>
            <person name="Delcher A."/>
            <person name="Deng Z."/>
            <person name="Mays A.D."/>
            <person name="Dew I."/>
            <person name="Dietz S.M."/>
            <person name="Dodson K."/>
            <person name="Doup L.E."/>
            <person name="Downes M."/>
            <person name="Dugan-Rocha S."/>
            <person name="Dunkov B.C."/>
            <person name="Dunn P."/>
            <person name="Durbin K.J."/>
            <person name="Evangelista C.C."/>
            <person name="Ferraz C."/>
            <person name="Ferriera S."/>
            <person name="Fleischmann W."/>
            <person name="Fosler C."/>
            <person name="Gabrielian A.E."/>
            <person name="Garg N.S."/>
            <person name="Gelbart W.M."/>
            <person name="Glasser K."/>
            <person name="Glodek A."/>
            <person name="Gong F."/>
            <person name="Gorrell J.H."/>
            <person name="Gu Z."/>
            <person name="Guan P."/>
            <person name="Harris M."/>
            <person name="Harris N.L."/>
            <person name="Harvey D.A."/>
            <person name="Heiman T.J."/>
            <person name="Hernandez J.R."/>
            <person name="Houck J."/>
            <person name="Hostin D."/>
            <person name="Houston K.A."/>
            <person name="Howland T.J."/>
            <person name="Wei M.-H."/>
            <person name="Ibegwam C."/>
            <person name="Jalali M."/>
            <person name="Kalush F."/>
            <person name="Karpen G.H."/>
            <person name="Ke Z."/>
            <person name="Kennison J.A."/>
            <person name="Ketchum K.A."/>
            <person name="Kimmel B.E."/>
            <person name="Kodira C.D."/>
            <person name="Kraft C.L."/>
            <person name="Kravitz S."/>
            <person name="Kulp D."/>
            <person name="Lai Z."/>
            <person name="Lasko P."/>
            <person name="Lei Y."/>
            <person name="Levitsky A.A."/>
            <person name="Li J.H."/>
            <person name="Li Z."/>
            <person name="Liang Y."/>
            <person name="Lin X."/>
            <person name="Liu X."/>
            <person name="Mattei B."/>
            <person name="McIntosh T.C."/>
            <person name="McLeod M.P."/>
            <person name="McPherson D."/>
            <person name="Merkulov G."/>
            <person name="Milshina N.V."/>
            <person name="Mobarry C."/>
            <person name="Morris J."/>
            <person name="Moshrefi A."/>
            <person name="Mount S.M."/>
            <person name="Moy M."/>
            <person name="Murphy B."/>
            <person name="Murphy L."/>
            <person name="Muzny D.M."/>
            <person name="Nelson D.L."/>
            <person name="Nelson D.R."/>
            <person name="Nelson K.A."/>
            <person name="Nixon K."/>
            <person name="Nusskern D.R."/>
            <person name="Pacleb J.M."/>
            <person name="Palazzolo M."/>
            <person name="Pittman G.S."/>
            <person name="Pan S."/>
            <person name="Pollard J."/>
            <person name="Puri V."/>
            <person name="Reese M.G."/>
            <person name="Reinert K."/>
            <person name="Remington K."/>
            <person name="Saunders R.D.C."/>
            <person name="Scheeler F."/>
            <person name="Shen H."/>
            <person name="Shue B.C."/>
            <person name="Siden-Kiamos I."/>
            <person name="Simpson M."/>
            <person name="Skupski M.P."/>
            <person name="Smith T.J."/>
            <person name="Spier E."/>
            <person name="Spradling A.C."/>
            <person name="Stapleton M."/>
            <person name="Strong R."/>
            <person name="Sun E."/>
            <person name="Svirskas R."/>
            <person name="Tector C."/>
            <person name="Turner R."/>
            <person name="Venter E."/>
            <person name="Wang A.H."/>
            <person name="Wang X."/>
            <person name="Wang Z.-Y."/>
            <person name="Wassarman D.A."/>
            <person name="Weinstock G.M."/>
            <person name="Weissenbach J."/>
            <person name="Williams S.M."/>
            <person name="Woodage T."/>
            <person name="Worley K.C."/>
            <person name="Wu D."/>
            <person name="Yang S."/>
            <person name="Yao Q.A."/>
            <person name="Ye J."/>
            <person name="Yeh R.-F."/>
            <person name="Zaveri J.S."/>
            <person name="Zhan M."/>
            <person name="Zhang G."/>
            <person name="Zhao Q."/>
            <person name="Zheng L."/>
            <person name="Zheng X.H."/>
            <person name="Zhong F.N."/>
            <person name="Zhong W."/>
            <person name="Zhou X."/>
            <person name="Zhu S.C."/>
            <person name="Zhu X."/>
            <person name="Smith H.O."/>
            <person name="Gibbs R.A."/>
            <person name="Myers E.W."/>
            <person name="Rubin G.M."/>
            <person name="Venter J.C."/>
        </authorList>
    </citation>
    <scope>NUCLEOTIDE SEQUENCE [LARGE SCALE GENOMIC DNA]</scope>
    <source>
        <strain evidence="9">Berkeley</strain>
    </source>
</reference>
<reference evidence="9" key="2">
    <citation type="journal article" date="2002" name="Genome Biol.">
        <title>Annotation of the Drosophila melanogaster euchromatic genome: a systematic review.</title>
        <authorList>
            <person name="Misra S."/>
            <person name="Crosby M.A."/>
            <person name="Mungall C.J."/>
            <person name="Matthews B.B."/>
            <person name="Campbell K.S."/>
            <person name="Hradecky P."/>
            <person name="Huang Y."/>
            <person name="Kaminker J.S."/>
            <person name="Millburn G.H."/>
            <person name="Prochnik S.E."/>
            <person name="Smith C.D."/>
            <person name="Tupy J.L."/>
            <person name="Whitfield E.J."/>
            <person name="Bayraktaroglu L."/>
            <person name="Berman B.P."/>
            <person name="Bettencourt B.R."/>
            <person name="Celniker S.E."/>
            <person name="de Grey A.D.N.J."/>
            <person name="Drysdale R.A."/>
            <person name="Harris N.L."/>
            <person name="Richter J."/>
            <person name="Russo S."/>
            <person name="Schroeder A.J."/>
            <person name="Shu S.Q."/>
            <person name="Stapleton M."/>
            <person name="Yamada C."/>
            <person name="Ashburner M."/>
            <person name="Gelbart W.M."/>
            <person name="Rubin G.M."/>
            <person name="Lewis S.E."/>
        </authorList>
    </citation>
    <scope>GENOME REANNOTATION</scope>
    <source>
        <strain evidence="9">Berkeley</strain>
    </source>
</reference>
<reference evidence="7" key="3">
    <citation type="journal article" date="2002" name="Genome Biol.">
        <title>A Drosophila full-length cDNA resource.</title>
        <authorList>
            <person name="Stapleton M."/>
            <person name="Carlson J.W."/>
            <person name="Brokstein P."/>
            <person name="Yu C."/>
            <person name="Champe M."/>
            <person name="George R.A."/>
            <person name="Guarin H."/>
            <person name="Kronmiller B."/>
            <person name="Pacleb J.M."/>
            <person name="Park S."/>
            <person name="Wan K.H."/>
            <person name="Rubin G.M."/>
            <person name="Celniker S.E."/>
        </authorList>
    </citation>
    <scope>NUCLEOTIDE SEQUENCE [LARGE SCALE MRNA]</scope>
    <source>
        <strain evidence="7">Berkeley</strain>
        <tissue evidence="7">Head</tissue>
    </source>
</reference>
<reference evidence="6" key="4">
    <citation type="journal article" date="2023" name="Nature">
        <title>A phosphate-sensing organelle regulates phosphate and tissue homeostasis.</title>
        <authorList>
            <person name="Xu C."/>
            <person name="Xu J."/>
            <person name="Tang H.W."/>
            <person name="Ericsson M."/>
            <person name="Weng J.H."/>
            <person name="DiRusso J."/>
            <person name="Hu Y."/>
            <person name="Ma W."/>
            <person name="Asara J.M."/>
            <person name="Perrimon N."/>
        </authorList>
    </citation>
    <scope>FUNCTION</scope>
    <scope>CATALYTIC ACTIVITY</scope>
    <scope>INTERACTION WITH CKA AND PP2A-29B</scope>
    <scope>SUBCELLULAR LOCATION</scope>
    <scope>TISSUE SPECIFICITY</scope>
    <scope>DISRUPTION PHENOTYPE</scope>
    <scope>MUTAGENESIS OF 1-MET--GLU-193</scope>
</reference>
<protein>
    <recommendedName>
        <fullName evidence="1">Solute carrier family 53 member 1</fullName>
    </recommendedName>
    <alternativeName>
        <fullName evidence="6">Inorganic phosphate-sensitive XPR1 homolog</fullName>
    </alternativeName>
    <alternativeName>
        <fullName evidence="5">Phosphate exporter PXo</fullName>
    </alternativeName>
    <alternativeName>
        <fullName evidence="6">Xenotropic and polytropic retrovirus receptor 1</fullName>
    </alternativeName>
</protein>
<evidence type="ECO:0000250" key="1">
    <source>
        <dbReference type="UniProtKB" id="Q9UBH6"/>
    </source>
</evidence>
<evidence type="ECO:0000250" key="2">
    <source>
        <dbReference type="UniProtKB" id="Q9Z0U0"/>
    </source>
</evidence>
<evidence type="ECO:0000255" key="3">
    <source>
        <dbReference type="PROSITE-ProRule" id="PRU00712"/>
    </source>
</evidence>
<evidence type="ECO:0000269" key="4">
    <source>
    </source>
</evidence>
<evidence type="ECO:0000303" key="5">
    <source>
    </source>
</evidence>
<evidence type="ECO:0000305" key="6"/>
<evidence type="ECO:0000312" key="7">
    <source>
        <dbReference type="EMBL" id="AAK93042.1"/>
    </source>
</evidence>
<evidence type="ECO:0000312" key="8">
    <source>
        <dbReference type="FlyBase" id="FBgn0035649"/>
    </source>
</evidence>
<evidence type="ECO:0000312" key="9">
    <source>
        <dbReference type="Proteomes" id="UP000000803"/>
    </source>
</evidence>
<dbReference type="EMBL" id="AE014296">
    <property type="protein sequence ID" value="AAF50730.1"/>
    <property type="molecule type" value="Genomic_DNA"/>
</dbReference>
<dbReference type="EMBL" id="AY051618">
    <property type="protein sequence ID" value="AAK93042.1"/>
    <property type="molecule type" value="mRNA"/>
</dbReference>
<dbReference type="RefSeq" id="NP_648000.1">
    <property type="nucleotide sequence ID" value="NM_139743.4"/>
</dbReference>
<dbReference type="SMR" id="Q9VRR2"/>
<dbReference type="FunCoup" id="Q9VRR2">
    <property type="interactions" value="1161"/>
</dbReference>
<dbReference type="IntAct" id="Q9VRR2">
    <property type="interactions" value="2"/>
</dbReference>
<dbReference type="STRING" id="7227.FBpp0076785"/>
<dbReference type="PaxDb" id="7227-FBpp0076785"/>
<dbReference type="DNASU" id="38666"/>
<dbReference type="EnsemblMetazoa" id="FBtr0077077">
    <property type="protein sequence ID" value="FBpp0076785"/>
    <property type="gene ID" value="FBgn0035649"/>
</dbReference>
<dbReference type="GeneID" id="38666"/>
<dbReference type="KEGG" id="dme:Dmel_CG10483"/>
<dbReference type="UCSC" id="CG10483-RA">
    <property type="organism name" value="d. melanogaster"/>
</dbReference>
<dbReference type="AGR" id="FB:FBgn0035649"/>
<dbReference type="CTD" id="38666"/>
<dbReference type="FlyBase" id="FBgn0035649">
    <property type="gene designation" value="PXo"/>
</dbReference>
<dbReference type="VEuPathDB" id="VectorBase:FBgn0035649"/>
<dbReference type="eggNOG" id="KOG1162">
    <property type="taxonomic scope" value="Eukaryota"/>
</dbReference>
<dbReference type="GeneTree" id="ENSGT00940000164519"/>
<dbReference type="HOGENOM" id="CLU_006116_3_0_1"/>
<dbReference type="InParanoid" id="Q9VRR2"/>
<dbReference type="OMA" id="IGVMFAH"/>
<dbReference type="OrthoDB" id="9970435at2759"/>
<dbReference type="BioGRID-ORCS" id="38666">
    <property type="hits" value="0 hits in 1 CRISPR screen"/>
</dbReference>
<dbReference type="GenomeRNAi" id="38666"/>
<dbReference type="PRO" id="PR:Q9VRR2"/>
<dbReference type="Proteomes" id="UP000000803">
    <property type="component" value="Chromosome 3L"/>
</dbReference>
<dbReference type="Bgee" id="FBgn0035649">
    <property type="expression patterns" value="Expressed in adult middle midgut class I enteroendocrine cell in adult midgut (Drosophila) and 66 other cell types or tissues"/>
</dbReference>
<dbReference type="ExpressionAtlas" id="Q9VRR2">
    <property type="expression patterns" value="baseline and differential"/>
</dbReference>
<dbReference type="GO" id="GO:0031090">
    <property type="term" value="C:organelle membrane"/>
    <property type="evidence" value="ECO:0000314"/>
    <property type="project" value="UniProtKB"/>
</dbReference>
<dbReference type="GO" id="GO:0005886">
    <property type="term" value="C:plasma membrane"/>
    <property type="evidence" value="ECO:0000318"/>
    <property type="project" value="GO_Central"/>
</dbReference>
<dbReference type="GO" id="GO:0000822">
    <property type="term" value="F:inositol hexakisphosphate binding"/>
    <property type="evidence" value="ECO:0000318"/>
    <property type="project" value="GO_Central"/>
</dbReference>
<dbReference type="GO" id="GO:0005315">
    <property type="term" value="F:phosphate transmembrane transporter activity"/>
    <property type="evidence" value="ECO:0000315"/>
    <property type="project" value="UniProtKB"/>
</dbReference>
<dbReference type="GO" id="GO:0016036">
    <property type="term" value="P:cellular response to phosphate starvation"/>
    <property type="evidence" value="ECO:0000318"/>
    <property type="project" value="GO_Central"/>
</dbReference>
<dbReference type="GO" id="GO:0030643">
    <property type="term" value="P:intracellular phosphate ion homeostasis"/>
    <property type="evidence" value="ECO:0000315"/>
    <property type="project" value="UniProtKB"/>
</dbReference>
<dbReference type="GO" id="GO:0008285">
    <property type="term" value="P:negative regulation of cell population proliferation"/>
    <property type="evidence" value="ECO:0000315"/>
    <property type="project" value="UniProtKB"/>
</dbReference>
<dbReference type="GO" id="GO:0043508">
    <property type="term" value="P:negative regulation of JUN kinase activity"/>
    <property type="evidence" value="ECO:0000315"/>
    <property type="project" value="UniProtKB"/>
</dbReference>
<dbReference type="GO" id="GO:0006817">
    <property type="term" value="P:phosphate ion transport"/>
    <property type="evidence" value="ECO:0000318"/>
    <property type="project" value="GO_Central"/>
</dbReference>
<dbReference type="GO" id="GO:0140255">
    <property type="term" value="P:regulation of cellular response to phosphate starvation"/>
    <property type="evidence" value="ECO:0000315"/>
    <property type="project" value="UniProtKB"/>
</dbReference>
<dbReference type="CDD" id="cd14477">
    <property type="entry name" value="SPX_XPR1_like"/>
    <property type="match status" value="1"/>
</dbReference>
<dbReference type="InterPro" id="IPR004342">
    <property type="entry name" value="EXS_C"/>
</dbReference>
<dbReference type="InterPro" id="IPR004331">
    <property type="entry name" value="SPX_dom"/>
</dbReference>
<dbReference type="PANTHER" id="PTHR10783:SF103">
    <property type="entry name" value="SOLUTE CARRIER FAMILY 53 MEMBER 1"/>
    <property type="match status" value="1"/>
</dbReference>
<dbReference type="PANTHER" id="PTHR10783">
    <property type="entry name" value="XENOTROPIC AND POLYTROPIC RETROVIRUS RECEPTOR 1-RELATED"/>
    <property type="match status" value="1"/>
</dbReference>
<dbReference type="Pfam" id="PF03124">
    <property type="entry name" value="EXS"/>
    <property type="match status" value="1"/>
</dbReference>
<dbReference type="Pfam" id="PF03105">
    <property type="entry name" value="SPX"/>
    <property type="match status" value="3"/>
</dbReference>
<dbReference type="PROSITE" id="PS51380">
    <property type="entry name" value="EXS"/>
    <property type="match status" value="1"/>
</dbReference>
<dbReference type="PROSITE" id="PS51382">
    <property type="entry name" value="SPX"/>
    <property type="match status" value="1"/>
</dbReference>
<sequence length="671" mass="78202">MKFAEHLTAHITPEWRKQYINYEEMKAMLYAAIEQSPSAELVEREMVTRYFAKFDEEFFHYCDKELAKINTFYSEKMAEATRKYGSLRSELTEALEMGHPKKLPAWKRRTPLGKKNVPARKIQDLKLAFSEFYLGLILLQNYQNLNFTGFRKILKKHDKLLSVDYGARWRTDHVEAAHFYTNKDIDRLIQETEQAVTQDIEGGDRQRAMKRLRVPPLGEQQSPWTTFKVGLFSGAFVVLFITVVIAAMFYGFGENWRAGMRMFRAPFLIIECLFLWGVNVYGWRSSGVNHVLIFELDPRNHLSEQNIMEVASVFGVIWACCVLSYIFCDPLGIPQYAAPLCLYTLMAAFLLNPTKTFHHEARFWAIRILIRVIMAPFCFVNFADFWLADQLNSMVPAFLDIPFLICFFGRSPTWHKAGKAASHCVEYVSLLHPIVAIMPAYFRFAQCIRRYRDTKESFPHLVNAAKYATSFFVVIFAHKYHTTTDTYPLSKENPWFYCWITAAIFSSCYAYTWDIKMDWGLFDSKAGDNRFLREEIVYSSTWFYYFGIIEDLILRFSWTLSMSLIEAGYIEGDVMMTILSPLEVFRRFIWNYFRLENEHLNNVGKFRAVRDISVAPMDCSDQTTILRMMDETDGVLNRRRGKAAGGKSATKKNKQEQRLLLQGESIEDLCS</sequence>
<feature type="chain" id="PRO_0000458750" description="Solute carrier family 53 member 1">
    <location>
        <begin position="1"/>
        <end position="671"/>
    </location>
</feature>
<feature type="topological domain" description="Cytoplasmic" evidence="1">
    <location>
        <begin position="1"/>
        <end position="228"/>
    </location>
</feature>
<feature type="transmembrane region" description="Helical; Name=1" evidence="1">
    <location>
        <begin position="229"/>
        <end position="253"/>
    </location>
</feature>
<feature type="topological domain" description="Extracellular" evidence="1">
    <location>
        <begin position="254"/>
        <end position="255"/>
    </location>
</feature>
<feature type="transmembrane region" description="Helical; Name=2" evidence="1">
    <location>
        <begin position="256"/>
        <end position="287"/>
    </location>
</feature>
<feature type="topological domain" description="Cytoplasmic" evidence="1">
    <location>
        <begin position="288"/>
        <end position="300"/>
    </location>
</feature>
<feature type="transmembrane region" description="Helical; Name=3" evidence="1">
    <location>
        <begin position="301"/>
        <end position="328"/>
    </location>
</feature>
<feature type="topological domain" description="Extracellular" evidence="1">
    <location>
        <begin position="329"/>
        <end position="334"/>
    </location>
</feature>
<feature type="transmembrane region" description="Helical; Name=4" evidence="1">
    <location>
        <begin position="335"/>
        <end position="356"/>
    </location>
</feature>
<feature type="intramembrane region" description="Helical" evidence="1">
    <location>
        <begin position="357"/>
        <end position="374"/>
    </location>
</feature>
<feature type="topological domain" description="Cytoplasmic" evidence="1">
    <location>
        <begin position="375"/>
        <end position="379"/>
    </location>
</feature>
<feature type="transmembrane region" description="Discontinuously helical; Name=5" evidence="1">
    <location>
        <begin position="380"/>
        <end position="413"/>
    </location>
</feature>
<feature type="topological domain" description="Extracellular" evidence="1">
    <location>
        <begin position="414"/>
        <end position="415"/>
    </location>
</feature>
<feature type="transmembrane region" description="Discontinuously helical; Name=6" evidence="1">
    <location>
        <begin position="416"/>
        <end position="455"/>
    </location>
</feature>
<feature type="topological domain" description="Cytoplasmic" evidence="1">
    <location>
        <position position="456"/>
    </location>
</feature>
<feature type="transmembrane region" description="Helical; Name=7" evidence="1">
    <location>
        <begin position="457"/>
        <end position="488"/>
    </location>
</feature>
<feature type="topological domain" description="Extracellular" evidence="1">
    <location>
        <begin position="489"/>
        <end position="491"/>
    </location>
</feature>
<feature type="transmembrane region" description="Helical; Name=8" evidence="1">
    <location>
        <begin position="492"/>
        <end position="519"/>
    </location>
</feature>
<feature type="topological domain" description="Cytoplasmic" evidence="1">
    <location>
        <begin position="520"/>
        <end position="538"/>
    </location>
</feature>
<feature type="transmembrane region" description="Discontinuously helical; Name=9" evidence="1">
    <location>
        <begin position="539"/>
        <end position="570"/>
    </location>
</feature>
<feature type="transmembrane region" description="Helical; Name=10" evidence="1">
    <location>
        <begin position="571"/>
        <end position="609"/>
    </location>
</feature>
<feature type="topological domain" description="Cytoplasmic" evidence="1">
    <location>
        <begin position="610"/>
        <end position="671"/>
    </location>
</feature>
<feature type="domain" description="SPX" evidence="1">
    <location>
        <begin position="2"/>
        <end position="218"/>
    </location>
</feature>
<feature type="domain" description="EXS" evidence="3">
    <location>
        <begin position="423"/>
        <end position="627"/>
    </location>
</feature>
<feature type="region of interest" description="Important for promoting lysosomal/autophagosomal degradation of PXo bodies following inorganic phosphate (Pi) starvation" evidence="4">
    <location>
        <begin position="1"/>
        <end position="193"/>
    </location>
</feature>
<feature type="region of interest" description="Important for inositol polyphosphate binding" evidence="1">
    <location>
        <begin position="152"/>
        <end position="159"/>
    </location>
</feature>
<feature type="binding site" evidence="1">
    <location>
        <position position="389"/>
    </location>
    <ligand>
        <name>phosphate</name>
        <dbReference type="ChEBI" id="CHEBI:43474"/>
    </ligand>
</feature>
<feature type="binding site" evidence="1">
    <location>
        <position position="392"/>
    </location>
    <ligand>
        <name>phosphate</name>
        <dbReference type="ChEBI" id="CHEBI:43474"/>
    </ligand>
</feature>
<feature type="binding site" evidence="1">
    <location>
        <position position="466"/>
    </location>
    <ligand>
        <name>phosphate</name>
        <dbReference type="ChEBI" id="CHEBI:43474"/>
    </ligand>
</feature>
<feature type="binding site" evidence="1">
    <location>
        <position position="467"/>
    </location>
    <ligand>
        <name>phosphate</name>
        <dbReference type="ChEBI" id="CHEBI:43474"/>
    </ligand>
</feature>
<feature type="binding site" evidence="1">
    <location>
        <position position="555"/>
    </location>
    <ligand>
        <name>phosphate</name>
        <dbReference type="ChEBI" id="CHEBI:43474"/>
    </ligand>
</feature>
<feature type="binding site" evidence="1">
    <location>
        <position position="586"/>
    </location>
    <ligand>
        <name>phosphate</name>
        <dbReference type="ChEBI" id="CHEBI:43474"/>
    </ligand>
</feature>
<feature type="binding site" evidence="1">
    <location>
        <position position="587"/>
    </location>
    <ligand>
        <name>phosphate</name>
        <dbReference type="ChEBI" id="CHEBI:43474"/>
    </ligand>
</feature>
<feature type="site" description="Gating residue for phosphate transport" evidence="1">
    <location>
        <position position="558"/>
    </location>
</feature>
<feature type="mutagenesis site" description="Not affected by phosphonoformic acid (PFA)." evidence="4">
    <location>
        <begin position="1"/>
        <end position="193"/>
    </location>
</feature>
<comment type="function">
    <text evidence="1 2 4">Inorganic ion transporter that mediates phosphate ion export across the cell membrane (PubMed:37138087). Plays a major role in phosphate homeostasis, preventing intracellular phosphate accumulation and possible calcium phosphate precipitation, ultimately preserving calcium signaling (PubMed:37138087). Binds inositol hexakisphosphate (Ins6P) and similar inositol polyphosphates, such as 5-diphospho-inositol pentakisphosphate (5-InsP7), which are important intracellular signaling molecules involved in regulation of phosphate flux (By similarity). In enterocytes and differentiating progenitors of the gut, promotes the biogenesis and maintenance of organelles called PXo bodies that store intracellular inorganic phosphate (Pi), and also regulates Cka-JNK mediated tissue homeostasis in response to Pi availability in these tissues (PubMed:37138087). Under conditions of adequate Pi, transports Pi into PXo bodies which convert and store the Pi in the form of phospholipids (PubMed:37138087). It also inhibits Cka at the post-transcriptional level to prevent Cka-bsk/JNK mediated cell proliferation (PubMed:37138087). Upon Pi starvation, Pxo expression is down-regulated resulting in the PXo bodies decreasing in phospholipid content until they undergo lysosomal/autophagosomal degradation and release the stored Pi back into the cytosol for use by the cell (PubMed:37138087). Decrease in Pxo expression also activates the Cka protein, which moves to the nucleus to activate bsk/JNK which then induces nearby progenitor cells to proliferate and form new absorptive cells, probably helping the organism to cope with the nutrient deficiency by maximizing absorption of dietary Pi (PubMed:37138087).</text>
</comment>
<comment type="catalytic activity">
    <reaction evidence="4">
        <text>phosphate(in) = phosphate(out)</text>
        <dbReference type="Rhea" id="RHEA:32823"/>
        <dbReference type="ChEBI" id="CHEBI:43474"/>
    </reaction>
    <physiologicalReaction direction="left-to-right" evidence="4">
        <dbReference type="Rhea" id="RHEA:32824"/>
    </physiologicalReaction>
</comment>
<comment type="subunit">
    <text evidence="1 4">Homodimer (By similarity). Interacts with the FAR/SIN/STRIPAK complex members Cka and Pp2A-29B (PubMed:37138087).</text>
</comment>
<comment type="subcellular location">
    <subcellularLocation>
        <location evidence="4">Membrane</location>
        <topology evidence="1">Multi-pass membrane protein</topology>
    </subcellularLocation>
    <text evidence="4">Localizes to the membrane of multi-membrane-layered organelles called PXo bodies, that function as intracellular reserves of inorganic phosphate stored in the form of phospholipids.</text>
</comment>
<comment type="tissue specificity">
    <text evidence="4">Detected in PXo bodies found in the enterocytes and progenitors of the midgut and in the hindgut, but rarely occur in the Malpighian tubules, crop, brain, muscles and germlines (at protein level).</text>
</comment>
<comment type="induction">
    <text evidence="4">Down-regulated in the midgut following inorganic phosphate starvation.</text>
</comment>
<comment type="domain">
    <text evidence="1">The SPX domain plays a role in the regulation of phosphate flux (By similarity). Inositol hexakisphosphate (Ins6P) is bound between two SPX domains of the homodimer (By similarity). The SPX domain has high affinity for inositol polyphosphates and its affinity for inorganic phosphate is two to three orders of magnitude lower (By similarity).</text>
</comment>
<comment type="disruption phenotype">
    <text evidence="4">RNAi-mediated knockdown results in various phenotypes that also occur in flies undergoing inorganic phosphate starvation, including activation of midgut hyperproliferation and activation of cell mitosis (PubMed:37138087). RNAi-mediated knockdown in either enterocytes or progenitors, induces mitosis under both under normal conditions and with bleomycin-induced tissue damage (PubMed:37138087). Enterocytes but not progenitors, display increased levels of cytosolic inorganic phosphate (PubMed:37138087). RNAi-mediated knockdown in enterocytes does not result in an increase in apoptosis (PubMed:37138087).</text>
</comment>
<comment type="similarity">
    <text evidence="6">Belongs to the SYG1 (TC 2.A.94) family.</text>
</comment>
<accession>Q9VRR2</accession>
<keyword id="KW-0472">Membrane</keyword>
<keyword id="KW-0592">Phosphate transport</keyword>
<keyword id="KW-1185">Reference proteome</keyword>
<keyword id="KW-0812">Transmembrane</keyword>
<keyword id="KW-1133">Transmembrane helix</keyword>
<keyword id="KW-0813">Transport</keyword>